<feature type="chain" id="PRO_1000212900" description="Rhamnulose-1-phosphate aldolase">
    <location>
        <begin position="1"/>
        <end position="274"/>
    </location>
</feature>
<feature type="active site" evidence="1">
    <location>
        <position position="117"/>
    </location>
</feature>
<feature type="binding site" evidence="1">
    <location>
        <position position="141"/>
    </location>
    <ligand>
        <name>Zn(2+)</name>
        <dbReference type="ChEBI" id="CHEBI:29105"/>
    </ligand>
</feature>
<feature type="binding site" evidence="1">
    <location>
        <position position="143"/>
    </location>
    <ligand>
        <name>Zn(2+)</name>
        <dbReference type="ChEBI" id="CHEBI:29105"/>
    </ligand>
</feature>
<feature type="binding site" evidence="1">
    <location>
        <position position="212"/>
    </location>
    <ligand>
        <name>Zn(2+)</name>
        <dbReference type="ChEBI" id="CHEBI:29105"/>
    </ligand>
</feature>
<protein>
    <recommendedName>
        <fullName evidence="1">Rhamnulose-1-phosphate aldolase</fullName>
        <ecNumber evidence="1">4.1.2.19</ecNumber>
    </recommendedName>
</protein>
<reference key="1">
    <citation type="submission" date="2009-07" db="EMBL/GenBank/DDBJ databases">
        <title>Complete sequence of Pectobacterium carotovorum subsp. carotovorum PC1.</title>
        <authorList>
            <consortium name="US DOE Joint Genome Institute"/>
            <person name="Lucas S."/>
            <person name="Copeland A."/>
            <person name="Lapidus A."/>
            <person name="Glavina del Rio T."/>
            <person name="Tice H."/>
            <person name="Bruce D."/>
            <person name="Goodwin L."/>
            <person name="Pitluck S."/>
            <person name="Munk A.C."/>
            <person name="Brettin T."/>
            <person name="Detter J.C."/>
            <person name="Han C."/>
            <person name="Tapia R."/>
            <person name="Larimer F."/>
            <person name="Land M."/>
            <person name="Hauser L."/>
            <person name="Kyrpides N."/>
            <person name="Mikhailova N."/>
            <person name="Balakrishnan V."/>
            <person name="Glasner J."/>
            <person name="Perna N.T."/>
        </authorList>
    </citation>
    <scope>NUCLEOTIDE SEQUENCE [LARGE SCALE GENOMIC DNA]</scope>
    <source>
        <strain>PC1</strain>
    </source>
</reference>
<keyword id="KW-0963">Cytoplasm</keyword>
<keyword id="KW-0456">Lyase</keyword>
<keyword id="KW-0479">Metal-binding</keyword>
<keyword id="KW-0684">Rhamnose metabolism</keyword>
<keyword id="KW-0862">Zinc</keyword>
<evidence type="ECO:0000255" key="1">
    <source>
        <dbReference type="HAMAP-Rule" id="MF_00770"/>
    </source>
</evidence>
<proteinExistence type="inferred from homology"/>
<dbReference type="EC" id="4.1.2.19" evidence="1"/>
<dbReference type="EMBL" id="CP001657">
    <property type="protein sequence ID" value="ACT11474.1"/>
    <property type="molecule type" value="Genomic_DNA"/>
</dbReference>
<dbReference type="RefSeq" id="WP_012773130.1">
    <property type="nucleotide sequence ID" value="NC_012917.1"/>
</dbReference>
<dbReference type="SMR" id="C6DJR1"/>
<dbReference type="STRING" id="561230.PC1_0418"/>
<dbReference type="KEGG" id="pct:PC1_0418"/>
<dbReference type="eggNOG" id="COG0235">
    <property type="taxonomic scope" value="Bacteria"/>
</dbReference>
<dbReference type="HOGENOM" id="CLU_076831_0_0_6"/>
<dbReference type="OrthoDB" id="9784634at2"/>
<dbReference type="UniPathway" id="UPA00541">
    <property type="reaction ID" value="UER00603"/>
</dbReference>
<dbReference type="Proteomes" id="UP000002736">
    <property type="component" value="Chromosome"/>
</dbReference>
<dbReference type="GO" id="GO:0005829">
    <property type="term" value="C:cytosol"/>
    <property type="evidence" value="ECO:0007669"/>
    <property type="project" value="TreeGrafter"/>
</dbReference>
<dbReference type="GO" id="GO:0046872">
    <property type="term" value="F:metal ion binding"/>
    <property type="evidence" value="ECO:0007669"/>
    <property type="project" value="UniProtKB-KW"/>
</dbReference>
<dbReference type="GO" id="GO:0008994">
    <property type="term" value="F:rhamnulose-1-phosphate aldolase activity"/>
    <property type="evidence" value="ECO:0007669"/>
    <property type="project" value="UniProtKB-UniRule"/>
</dbReference>
<dbReference type="GO" id="GO:0019323">
    <property type="term" value="P:pentose catabolic process"/>
    <property type="evidence" value="ECO:0007669"/>
    <property type="project" value="TreeGrafter"/>
</dbReference>
<dbReference type="GO" id="GO:0019301">
    <property type="term" value="P:rhamnose catabolic process"/>
    <property type="evidence" value="ECO:0007669"/>
    <property type="project" value="UniProtKB-UniRule"/>
</dbReference>
<dbReference type="CDD" id="cd00398">
    <property type="entry name" value="Aldolase_II"/>
    <property type="match status" value="1"/>
</dbReference>
<dbReference type="FunFam" id="3.40.225.10:FF:000006">
    <property type="entry name" value="Rhamnulose-1-phosphate aldolase"/>
    <property type="match status" value="1"/>
</dbReference>
<dbReference type="Gene3D" id="3.40.225.10">
    <property type="entry name" value="Class II aldolase/adducin N-terminal domain"/>
    <property type="match status" value="1"/>
</dbReference>
<dbReference type="HAMAP" id="MF_00770">
    <property type="entry name" value="RhaD"/>
    <property type="match status" value="1"/>
</dbReference>
<dbReference type="InterPro" id="IPR050197">
    <property type="entry name" value="Aldolase_class_II_sugar_metab"/>
</dbReference>
<dbReference type="InterPro" id="IPR001303">
    <property type="entry name" value="Aldolase_II/adducin_N"/>
</dbReference>
<dbReference type="InterPro" id="IPR036409">
    <property type="entry name" value="Aldolase_II/adducin_N_sf"/>
</dbReference>
<dbReference type="InterPro" id="IPR013447">
    <property type="entry name" value="Rhamnulose-1-P_Aldolase"/>
</dbReference>
<dbReference type="NCBIfam" id="NF002963">
    <property type="entry name" value="PRK03634.1"/>
    <property type="match status" value="1"/>
</dbReference>
<dbReference type="NCBIfam" id="TIGR02624">
    <property type="entry name" value="rhamnu_1P_ald"/>
    <property type="match status" value="1"/>
</dbReference>
<dbReference type="PANTHER" id="PTHR22789">
    <property type="entry name" value="FUCULOSE PHOSPHATE ALDOLASE"/>
    <property type="match status" value="1"/>
</dbReference>
<dbReference type="PANTHER" id="PTHR22789:SF16">
    <property type="entry name" value="RHAMNULOSE-1-PHOSPHATE ALDOLASE"/>
    <property type="match status" value="1"/>
</dbReference>
<dbReference type="Pfam" id="PF00596">
    <property type="entry name" value="Aldolase_II"/>
    <property type="match status" value="1"/>
</dbReference>
<dbReference type="SMART" id="SM01007">
    <property type="entry name" value="Aldolase_II"/>
    <property type="match status" value="1"/>
</dbReference>
<dbReference type="SUPFAM" id="SSF53639">
    <property type="entry name" value="AraD/HMP-PK domain-like"/>
    <property type="match status" value="1"/>
</dbReference>
<accession>C6DJR1</accession>
<name>RHAD_PECCP</name>
<gene>
    <name evidence="1" type="primary">rhaD</name>
    <name type="ordered locus">PC1_0418</name>
</gene>
<comment type="function">
    <text evidence="1">Catalyzes the reversible cleavage of L-rhamnulose-1-phosphate to dihydroxyacetone phosphate (DHAP) and L-lactaldehyde.</text>
</comment>
<comment type="catalytic activity">
    <reaction evidence="1">
        <text>L-rhamnulose 1-phosphate = (S)-lactaldehyde + dihydroxyacetone phosphate</text>
        <dbReference type="Rhea" id="RHEA:19689"/>
        <dbReference type="ChEBI" id="CHEBI:18041"/>
        <dbReference type="ChEBI" id="CHEBI:57642"/>
        <dbReference type="ChEBI" id="CHEBI:58313"/>
        <dbReference type="EC" id="4.1.2.19"/>
    </reaction>
</comment>
<comment type="cofactor">
    <cofactor evidence="1">
        <name>Zn(2+)</name>
        <dbReference type="ChEBI" id="CHEBI:29105"/>
    </cofactor>
    <text evidence="1">Binds 1 zinc ion per subunit.</text>
</comment>
<comment type="pathway">
    <text evidence="1">Carbohydrate degradation; L-rhamnose degradation; glycerone phosphate from L-rhamnose: step 3/3.</text>
</comment>
<comment type="subunit">
    <text evidence="1">Homotetramer.</text>
</comment>
<comment type="subcellular location">
    <subcellularLocation>
        <location evidence="1">Cytoplasm</location>
    </subcellularLocation>
</comment>
<comment type="similarity">
    <text evidence="1">Belongs to the aldolase class II family. RhaD subfamily.</text>
</comment>
<sequence>MQAILSSWFVQGMIKATSDMWLKGWDERNGGNVSLRLTAEDVTPYESDFYPQPRHEALSQPMPALADCWFIVTGSGKFFRNVQLDPADSLVVLQVDSDGKGYRIFWGLTNGGLPTSELASHFQSHIVRMGVTHGHDRVIMHCHATNLIALSYVLELDTAKFTRELWEGSTECLVVFPDGVGIVPWMVPGTDAIGDATSEQMQRHSLVLWPFHGIFGTGPTLDDAFGLIDTAEKSAEVMVKVRSMGGKKQTISTEELIALGKRFGVTPMEVALRV</sequence>
<organism>
    <name type="scientific">Pectobacterium carotovorum subsp. carotovorum (strain PC1)</name>
    <dbReference type="NCBI Taxonomy" id="561230"/>
    <lineage>
        <taxon>Bacteria</taxon>
        <taxon>Pseudomonadati</taxon>
        <taxon>Pseudomonadota</taxon>
        <taxon>Gammaproteobacteria</taxon>
        <taxon>Enterobacterales</taxon>
        <taxon>Pectobacteriaceae</taxon>
        <taxon>Pectobacterium</taxon>
    </lineage>
</organism>